<proteinExistence type="inferred from homology"/>
<comment type="function">
    <text evidence="1">Involved in the heme biosynthesis. Catalyzes the aerobic oxidative decarboxylation of propionate groups of rings A and B of coproporphyrinogen-III to yield the vinyl groups in protoporphyrinogen-IX.</text>
</comment>
<comment type="catalytic activity">
    <reaction evidence="1">
        <text>coproporphyrinogen III + O2 + 2 H(+) = protoporphyrinogen IX + 2 CO2 + 2 H2O</text>
        <dbReference type="Rhea" id="RHEA:18257"/>
        <dbReference type="ChEBI" id="CHEBI:15377"/>
        <dbReference type="ChEBI" id="CHEBI:15378"/>
        <dbReference type="ChEBI" id="CHEBI:15379"/>
        <dbReference type="ChEBI" id="CHEBI:16526"/>
        <dbReference type="ChEBI" id="CHEBI:57307"/>
        <dbReference type="ChEBI" id="CHEBI:57309"/>
        <dbReference type="EC" id="1.3.3.3"/>
    </reaction>
</comment>
<comment type="cofactor">
    <cofactor evidence="1">
        <name>a divalent metal cation</name>
        <dbReference type="ChEBI" id="CHEBI:60240"/>
    </cofactor>
</comment>
<comment type="pathway">
    <text evidence="1">Porphyrin-containing compound metabolism; protoporphyrin-IX biosynthesis; protoporphyrinogen-IX from coproporphyrinogen-III (O2 route): step 1/1.</text>
</comment>
<comment type="subunit">
    <text evidence="1">Homodimer.</text>
</comment>
<comment type="subcellular location">
    <subcellularLocation>
        <location evidence="1">Cytoplasm</location>
    </subcellularLocation>
</comment>
<comment type="similarity">
    <text evidence="1">Belongs to the aerobic coproporphyrinogen-III oxidase family.</text>
</comment>
<accession>B2SK75</accession>
<sequence>MNEFDRVRDYLTDLQDRICAAVEAADGKARFAEDLWKREEGGGGRTRILRDGAVFEQAGIGFSDVSGTRLPPSASAHRPELAGATWRACGVSLVFHPHNPYIPTTHMNVRYFRAERDGEVVAAWFGGGFDLTPFYPFDEDVQHWHRVAQALCEPFGEERYAAHKRWCDEYFFLRHRNETRGVGGLFFDDLGKEFEHDFAYQQAVGNGFLDAYMPIVQRRKDTAYGEREREFQLYRRGRYVEFNLVYDRGTLFGLQSGGRAESILMSLPPRVRWEYGFTPEPGSAEARLADYLIPRDWLG</sequence>
<name>HEM6_XANOP</name>
<keyword id="KW-0963">Cytoplasm</keyword>
<keyword id="KW-0350">Heme biosynthesis</keyword>
<keyword id="KW-0479">Metal-binding</keyword>
<keyword id="KW-0560">Oxidoreductase</keyword>
<keyword id="KW-0627">Porphyrin biosynthesis</keyword>
<organism>
    <name type="scientific">Xanthomonas oryzae pv. oryzae (strain PXO99A)</name>
    <dbReference type="NCBI Taxonomy" id="360094"/>
    <lineage>
        <taxon>Bacteria</taxon>
        <taxon>Pseudomonadati</taxon>
        <taxon>Pseudomonadota</taxon>
        <taxon>Gammaproteobacteria</taxon>
        <taxon>Lysobacterales</taxon>
        <taxon>Lysobacteraceae</taxon>
        <taxon>Xanthomonas</taxon>
    </lineage>
</organism>
<gene>
    <name evidence="1" type="primary">hemF</name>
    <name type="ordered locus">PXO_03935</name>
</gene>
<dbReference type="EC" id="1.3.3.3" evidence="1"/>
<dbReference type="EMBL" id="CP000967">
    <property type="protein sequence ID" value="ACD57212.1"/>
    <property type="molecule type" value="Genomic_DNA"/>
</dbReference>
<dbReference type="RefSeq" id="WP_011260560.1">
    <property type="nucleotide sequence ID" value="NC_010717.2"/>
</dbReference>
<dbReference type="SMR" id="B2SK75"/>
<dbReference type="KEGG" id="xop:PXO_03935"/>
<dbReference type="eggNOG" id="COG0408">
    <property type="taxonomic scope" value="Bacteria"/>
</dbReference>
<dbReference type="HOGENOM" id="CLU_026169_0_1_6"/>
<dbReference type="UniPathway" id="UPA00251">
    <property type="reaction ID" value="UER00322"/>
</dbReference>
<dbReference type="Proteomes" id="UP000001740">
    <property type="component" value="Chromosome"/>
</dbReference>
<dbReference type="GO" id="GO:0005737">
    <property type="term" value="C:cytoplasm"/>
    <property type="evidence" value="ECO:0007669"/>
    <property type="project" value="UniProtKB-SubCell"/>
</dbReference>
<dbReference type="GO" id="GO:0004109">
    <property type="term" value="F:coproporphyrinogen oxidase activity"/>
    <property type="evidence" value="ECO:0007669"/>
    <property type="project" value="UniProtKB-UniRule"/>
</dbReference>
<dbReference type="GO" id="GO:0046872">
    <property type="term" value="F:metal ion binding"/>
    <property type="evidence" value="ECO:0007669"/>
    <property type="project" value="UniProtKB-KW"/>
</dbReference>
<dbReference type="GO" id="GO:0042803">
    <property type="term" value="F:protein homodimerization activity"/>
    <property type="evidence" value="ECO:0000250"/>
    <property type="project" value="UniProtKB"/>
</dbReference>
<dbReference type="GO" id="GO:0006782">
    <property type="term" value="P:protoporphyrinogen IX biosynthetic process"/>
    <property type="evidence" value="ECO:0007669"/>
    <property type="project" value="UniProtKB-UniRule"/>
</dbReference>
<dbReference type="FunFam" id="3.40.1500.10:FF:000001">
    <property type="entry name" value="Oxygen-dependent coproporphyrinogen-III oxidase"/>
    <property type="match status" value="1"/>
</dbReference>
<dbReference type="Gene3D" id="3.40.1500.10">
    <property type="entry name" value="Coproporphyrinogen III oxidase, aerobic"/>
    <property type="match status" value="1"/>
</dbReference>
<dbReference type="HAMAP" id="MF_00333">
    <property type="entry name" value="Coprogen_oxidas"/>
    <property type="match status" value="1"/>
</dbReference>
<dbReference type="InterPro" id="IPR001260">
    <property type="entry name" value="Coprogen_oxidase_aer"/>
</dbReference>
<dbReference type="InterPro" id="IPR036406">
    <property type="entry name" value="Coprogen_oxidase_aer_sf"/>
</dbReference>
<dbReference type="InterPro" id="IPR018375">
    <property type="entry name" value="Coprogen_oxidase_CS"/>
</dbReference>
<dbReference type="NCBIfam" id="NF003727">
    <property type="entry name" value="PRK05330.1"/>
    <property type="match status" value="1"/>
</dbReference>
<dbReference type="PANTHER" id="PTHR10755">
    <property type="entry name" value="COPROPORPHYRINOGEN III OXIDASE, MITOCHONDRIAL"/>
    <property type="match status" value="1"/>
</dbReference>
<dbReference type="PANTHER" id="PTHR10755:SF0">
    <property type="entry name" value="OXYGEN-DEPENDENT COPROPORPHYRINOGEN-III OXIDASE, MITOCHONDRIAL"/>
    <property type="match status" value="1"/>
</dbReference>
<dbReference type="Pfam" id="PF01218">
    <property type="entry name" value="Coprogen_oxidas"/>
    <property type="match status" value="1"/>
</dbReference>
<dbReference type="PIRSF" id="PIRSF000166">
    <property type="entry name" value="Coproporphyri_ox"/>
    <property type="match status" value="1"/>
</dbReference>
<dbReference type="PRINTS" id="PR00073">
    <property type="entry name" value="COPRGNOXDASE"/>
</dbReference>
<dbReference type="SUPFAM" id="SSF102886">
    <property type="entry name" value="Coproporphyrinogen III oxidase"/>
    <property type="match status" value="1"/>
</dbReference>
<dbReference type="PROSITE" id="PS01021">
    <property type="entry name" value="COPROGEN_OXIDASE"/>
    <property type="match status" value="1"/>
</dbReference>
<evidence type="ECO:0000255" key="1">
    <source>
        <dbReference type="HAMAP-Rule" id="MF_00333"/>
    </source>
</evidence>
<protein>
    <recommendedName>
        <fullName evidence="1">Oxygen-dependent coproporphyrinogen-III oxidase</fullName>
        <shortName evidence="1">CPO</shortName>
        <shortName evidence="1">Coprogen oxidase</shortName>
        <shortName evidence="1">Coproporphyrinogenase</shortName>
        <ecNumber evidence="1">1.3.3.3</ecNumber>
    </recommendedName>
</protein>
<reference key="1">
    <citation type="journal article" date="2008" name="BMC Genomics">
        <title>Genome sequence and rapid evolution of the rice pathogen Xanthomonas oryzae pv. oryzae PXO99A.</title>
        <authorList>
            <person name="Salzberg S.L."/>
            <person name="Sommer D.D."/>
            <person name="Schatz M.C."/>
            <person name="Phillippy A.M."/>
            <person name="Rabinowicz P.D."/>
            <person name="Tsuge S."/>
            <person name="Furutani A."/>
            <person name="Ochiai H."/>
            <person name="Delcher A.L."/>
            <person name="Kelley D."/>
            <person name="Madupu R."/>
            <person name="Puiu D."/>
            <person name="Radune D."/>
            <person name="Shumway M."/>
            <person name="Trapnell C."/>
            <person name="Aparna G."/>
            <person name="Jha G."/>
            <person name="Pandey A."/>
            <person name="Patil P.B."/>
            <person name="Ishihara H."/>
            <person name="Meyer D.F."/>
            <person name="Szurek B."/>
            <person name="Verdier V."/>
            <person name="Koebnik R."/>
            <person name="Dow J.M."/>
            <person name="Ryan R.P."/>
            <person name="Hirata H."/>
            <person name="Tsuyumu S."/>
            <person name="Won Lee S."/>
            <person name="Seo Y.-S."/>
            <person name="Sriariyanum M."/>
            <person name="Ronald P.C."/>
            <person name="Sonti R.V."/>
            <person name="Van Sluys M.-A."/>
            <person name="Leach J.E."/>
            <person name="White F.F."/>
            <person name="Bogdanove A.J."/>
        </authorList>
    </citation>
    <scope>NUCLEOTIDE SEQUENCE [LARGE SCALE GENOMIC DNA]</scope>
    <source>
        <strain>PXO99A</strain>
    </source>
</reference>
<feature type="chain" id="PRO_1000119834" description="Oxygen-dependent coproporphyrinogen-III oxidase">
    <location>
        <begin position="1"/>
        <end position="299"/>
    </location>
</feature>
<feature type="region of interest" description="Important for dimerization" evidence="1">
    <location>
        <begin position="239"/>
        <end position="274"/>
    </location>
</feature>
<feature type="active site" description="Proton donor" evidence="1">
    <location>
        <position position="106"/>
    </location>
</feature>
<feature type="binding site" evidence="1">
    <location>
        <position position="92"/>
    </location>
    <ligand>
        <name>substrate</name>
    </ligand>
</feature>
<feature type="binding site" evidence="1">
    <location>
        <position position="96"/>
    </location>
    <ligand>
        <name>a divalent metal cation</name>
        <dbReference type="ChEBI" id="CHEBI:60240"/>
    </ligand>
</feature>
<feature type="binding site" evidence="1">
    <location>
        <position position="106"/>
    </location>
    <ligand>
        <name>a divalent metal cation</name>
        <dbReference type="ChEBI" id="CHEBI:60240"/>
    </ligand>
</feature>
<feature type="binding site" evidence="1">
    <location>
        <begin position="108"/>
        <end position="110"/>
    </location>
    <ligand>
        <name>substrate</name>
    </ligand>
</feature>
<feature type="binding site" evidence="1">
    <location>
        <position position="145"/>
    </location>
    <ligand>
        <name>a divalent metal cation</name>
        <dbReference type="ChEBI" id="CHEBI:60240"/>
    </ligand>
</feature>
<feature type="binding site" evidence="1">
    <location>
        <position position="175"/>
    </location>
    <ligand>
        <name>a divalent metal cation</name>
        <dbReference type="ChEBI" id="CHEBI:60240"/>
    </ligand>
</feature>
<feature type="binding site" evidence="1">
    <location>
        <begin position="257"/>
        <end position="259"/>
    </location>
    <ligand>
        <name>substrate</name>
    </ligand>
</feature>
<feature type="site" description="Important for dimerization" evidence="1">
    <location>
        <position position="175"/>
    </location>
</feature>